<proteinExistence type="inferred from homology"/>
<accession>P50774</accession>
<dbReference type="EMBL" id="U21941">
    <property type="protein sequence ID" value="AAC54855.1"/>
    <property type="molecule type" value="Genomic_DNA"/>
</dbReference>
<dbReference type="Proteomes" id="UP000007677">
    <property type="component" value="Segment"/>
</dbReference>
<dbReference type="InterPro" id="IPR004270">
    <property type="entry name" value="Papilloma_E5_alpha"/>
</dbReference>
<dbReference type="Pfam" id="PF03025">
    <property type="entry name" value="Papilloma_E5"/>
    <property type="match status" value="1"/>
</dbReference>
<name>VE5_HPV70</name>
<evidence type="ECO:0000305" key="1"/>
<gene>
    <name type="primary">E5</name>
</gene>
<feature type="chain" id="PRO_0000133299" description="Probable protein E5">
    <location>
        <begin position="1"/>
        <end position="78"/>
    </location>
</feature>
<comment type="similarity">
    <text evidence="1">Belongs to the papillomaviridae E5 protein family.</text>
</comment>
<reference key="1">
    <citation type="journal article" date="1996" name="J. Clin. Microbiol.">
        <title>Human papillomavirus type 70 genome cloned from overlapping PCR products: complete nucleotide sequence and genomic organization.</title>
        <authorList>
            <person name="Forslund O."/>
            <person name="Hansson B.G."/>
        </authorList>
    </citation>
    <scope>NUCLEOTIDE SEQUENCE [GENOMIC DNA]</scope>
</reference>
<sequence>MYIVYISMIALVFLVWFAVCLYICCSVPLLPSVHLCAYMWLLLFVFIVVHTTPLQMFCIYLLFFILPMWFLHILSVYA</sequence>
<organism>
    <name type="scientific">Human papillomavirus type 70</name>
    <dbReference type="NCBI Taxonomy" id="39457"/>
    <lineage>
        <taxon>Viruses</taxon>
        <taxon>Monodnaviria</taxon>
        <taxon>Shotokuvirae</taxon>
        <taxon>Cossaviricota</taxon>
        <taxon>Papovaviricetes</taxon>
        <taxon>Zurhausenvirales</taxon>
        <taxon>Papillomaviridae</taxon>
        <taxon>Firstpapillomavirinae</taxon>
        <taxon>Alphapapillomavirus</taxon>
        <taxon>Alphapapillomavirus 7</taxon>
    </lineage>
</organism>
<organismHost>
    <name type="scientific">Homo sapiens</name>
    <name type="common">Human</name>
    <dbReference type="NCBI Taxonomy" id="9606"/>
</organismHost>
<protein>
    <recommendedName>
        <fullName>Probable protein E5</fullName>
    </recommendedName>
</protein>
<keyword id="KW-0244">Early protein</keyword>
<keyword id="KW-1185">Reference proteome</keyword>